<evidence type="ECO:0000255" key="1">
    <source>
        <dbReference type="HAMAP-Rule" id="MF_00291"/>
    </source>
</evidence>
<evidence type="ECO:0000256" key="2">
    <source>
        <dbReference type="SAM" id="MobiDB-lite"/>
    </source>
</evidence>
<evidence type="ECO:0000305" key="3"/>
<gene>
    <name evidence="1" type="primary">rpsB</name>
    <name type="ordered locus">PG_0377</name>
</gene>
<reference key="1">
    <citation type="journal article" date="2003" name="J. Bacteriol.">
        <title>Complete genome sequence of the oral pathogenic bacterium Porphyromonas gingivalis strain W83.</title>
        <authorList>
            <person name="Nelson K.E."/>
            <person name="Fleischmann R.D."/>
            <person name="DeBoy R.T."/>
            <person name="Paulsen I.T."/>
            <person name="Fouts D.E."/>
            <person name="Eisen J.A."/>
            <person name="Daugherty S.C."/>
            <person name="Dodson R.J."/>
            <person name="Durkin A.S."/>
            <person name="Gwinn M.L."/>
            <person name="Haft D.H."/>
            <person name="Kolonay J.F."/>
            <person name="Nelson W.C."/>
            <person name="Mason T.M."/>
            <person name="Tallon L."/>
            <person name="Gray J."/>
            <person name="Granger D."/>
            <person name="Tettelin H."/>
            <person name="Dong H."/>
            <person name="Galvin J.L."/>
            <person name="Duncan M.J."/>
            <person name="Dewhirst F.E."/>
            <person name="Fraser C.M."/>
        </authorList>
    </citation>
    <scope>NUCLEOTIDE SEQUENCE [LARGE SCALE GENOMIC DNA]</scope>
    <source>
        <strain>ATCC BAA-308 / W83</strain>
    </source>
</reference>
<name>RS2_PORGI</name>
<feature type="chain" id="PRO_0000134215" description="Small ribosomal subunit protein uS2">
    <location>
        <begin position="1"/>
        <end position="281"/>
    </location>
</feature>
<feature type="region of interest" description="Disordered" evidence="2">
    <location>
        <begin position="225"/>
        <end position="281"/>
    </location>
</feature>
<feature type="compositionally biased region" description="Basic residues" evidence="2">
    <location>
        <begin position="245"/>
        <end position="256"/>
    </location>
</feature>
<feature type="compositionally biased region" description="Low complexity" evidence="2">
    <location>
        <begin position="262"/>
        <end position="272"/>
    </location>
</feature>
<proteinExistence type="inferred from homology"/>
<dbReference type="EMBL" id="AE015924">
    <property type="protein sequence ID" value="AAQ65584.1"/>
    <property type="molecule type" value="Genomic_DNA"/>
</dbReference>
<dbReference type="RefSeq" id="WP_004584904.1">
    <property type="nucleotide sequence ID" value="NC_002950.2"/>
</dbReference>
<dbReference type="SMR" id="Q7MX41"/>
<dbReference type="STRING" id="242619.PG_0377"/>
<dbReference type="EnsemblBacteria" id="AAQ65584">
    <property type="protein sequence ID" value="AAQ65584"/>
    <property type="gene ID" value="PG_0377"/>
</dbReference>
<dbReference type="GeneID" id="29256763"/>
<dbReference type="KEGG" id="pgi:PG_0377"/>
<dbReference type="eggNOG" id="COG0052">
    <property type="taxonomic scope" value="Bacteria"/>
</dbReference>
<dbReference type="HOGENOM" id="CLU_040318_0_2_10"/>
<dbReference type="Proteomes" id="UP000000588">
    <property type="component" value="Chromosome"/>
</dbReference>
<dbReference type="GO" id="GO:0022627">
    <property type="term" value="C:cytosolic small ribosomal subunit"/>
    <property type="evidence" value="ECO:0007669"/>
    <property type="project" value="TreeGrafter"/>
</dbReference>
<dbReference type="GO" id="GO:0003735">
    <property type="term" value="F:structural constituent of ribosome"/>
    <property type="evidence" value="ECO:0007669"/>
    <property type="project" value="InterPro"/>
</dbReference>
<dbReference type="GO" id="GO:0006412">
    <property type="term" value="P:translation"/>
    <property type="evidence" value="ECO:0007669"/>
    <property type="project" value="UniProtKB-UniRule"/>
</dbReference>
<dbReference type="CDD" id="cd01425">
    <property type="entry name" value="RPS2"/>
    <property type="match status" value="1"/>
</dbReference>
<dbReference type="FunFam" id="1.10.287.610:FF:000001">
    <property type="entry name" value="30S ribosomal protein S2"/>
    <property type="match status" value="1"/>
</dbReference>
<dbReference type="Gene3D" id="3.40.50.10490">
    <property type="entry name" value="Glucose-6-phosphate isomerase like protein, domain 1"/>
    <property type="match status" value="1"/>
</dbReference>
<dbReference type="Gene3D" id="1.10.287.610">
    <property type="entry name" value="Helix hairpin bin"/>
    <property type="match status" value="1"/>
</dbReference>
<dbReference type="HAMAP" id="MF_00291_B">
    <property type="entry name" value="Ribosomal_uS2_B"/>
    <property type="match status" value="1"/>
</dbReference>
<dbReference type="InterPro" id="IPR001865">
    <property type="entry name" value="Ribosomal_uS2"/>
</dbReference>
<dbReference type="InterPro" id="IPR005706">
    <property type="entry name" value="Ribosomal_uS2_bac/mit/plastid"/>
</dbReference>
<dbReference type="InterPro" id="IPR018130">
    <property type="entry name" value="Ribosomal_uS2_CS"/>
</dbReference>
<dbReference type="InterPro" id="IPR023591">
    <property type="entry name" value="Ribosomal_uS2_flav_dom_sf"/>
</dbReference>
<dbReference type="NCBIfam" id="TIGR01011">
    <property type="entry name" value="rpsB_bact"/>
    <property type="match status" value="1"/>
</dbReference>
<dbReference type="PANTHER" id="PTHR12534">
    <property type="entry name" value="30S RIBOSOMAL PROTEIN S2 PROKARYOTIC AND ORGANELLAR"/>
    <property type="match status" value="1"/>
</dbReference>
<dbReference type="PANTHER" id="PTHR12534:SF0">
    <property type="entry name" value="SMALL RIBOSOMAL SUBUNIT PROTEIN US2M"/>
    <property type="match status" value="1"/>
</dbReference>
<dbReference type="Pfam" id="PF00318">
    <property type="entry name" value="Ribosomal_S2"/>
    <property type="match status" value="1"/>
</dbReference>
<dbReference type="PRINTS" id="PR00395">
    <property type="entry name" value="RIBOSOMALS2"/>
</dbReference>
<dbReference type="SUPFAM" id="SSF52313">
    <property type="entry name" value="Ribosomal protein S2"/>
    <property type="match status" value="1"/>
</dbReference>
<dbReference type="PROSITE" id="PS00962">
    <property type="entry name" value="RIBOSOMAL_S2_1"/>
    <property type="match status" value="1"/>
</dbReference>
<dbReference type="PROSITE" id="PS00963">
    <property type="entry name" value="RIBOSOMAL_S2_2"/>
    <property type="match status" value="1"/>
</dbReference>
<sequence length="281" mass="31440">MSRISFDQLLEAGAHFGHLKRKWNPAMAPYIFMERNDIHIIDLHKTVAKVDEAAEVIKGMAKNGKKILFVATKKQAKEPIAELAKSVGMPYVVERWPGGMLTNFPTIRKAVKKMTQIDKMTADGTFDNLSKREKLQITRQRAKLEKTLGSIADMNRLPSALFVVDVMKEHIAVREANRLGIPVFAMVDTNSDPSLIDYVIPSNDDALKAIELIVGTMCQAINEGLMERKAEKPEEEETEEAAPRRERRARSGARRSRQNENEATAEAATEVAEAPEAEEAE</sequence>
<organism>
    <name type="scientific">Porphyromonas gingivalis (strain ATCC BAA-308 / W83)</name>
    <dbReference type="NCBI Taxonomy" id="242619"/>
    <lineage>
        <taxon>Bacteria</taxon>
        <taxon>Pseudomonadati</taxon>
        <taxon>Bacteroidota</taxon>
        <taxon>Bacteroidia</taxon>
        <taxon>Bacteroidales</taxon>
        <taxon>Porphyromonadaceae</taxon>
        <taxon>Porphyromonas</taxon>
    </lineage>
</organism>
<accession>Q7MX41</accession>
<protein>
    <recommendedName>
        <fullName evidence="1">Small ribosomal subunit protein uS2</fullName>
    </recommendedName>
    <alternativeName>
        <fullName evidence="3">30S ribosomal protein S2</fullName>
    </alternativeName>
</protein>
<keyword id="KW-1185">Reference proteome</keyword>
<keyword id="KW-0687">Ribonucleoprotein</keyword>
<keyword id="KW-0689">Ribosomal protein</keyword>
<comment type="similarity">
    <text evidence="1">Belongs to the universal ribosomal protein uS2 family.</text>
</comment>